<dbReference type="EC" id="2.4.1.14"/>
<dbReference type="EMBL" id="Z56278">
    <property type="protein sequence ID" value="CAA91217.1"/>
    <property type="molecule type" value="mRNA"/>
</dbReference>
<dbReference type="EMBL" id="Z48640">
    <property type="protein sequence ID" value="CAA88587.1"/>
    <property type="molecule type" value="mRNA"/>
</dbReference>
<dbReference type="PIR" id="S53083">
    <property type="entry name" value="S53083"/>
</dbReference>
<dbReference type="PIR" id="T12195">
    <property type="entry name" value="T12195"/>
</dbReference>
<dbReference type="SMR" id="Q43876"/>
<dbReference type="CAZy" id="GT4">
    <property type="family name" value="Glycosyltransferase Family 4"/>
</dbReference>
<dbReference type="UniPathway" id="UPA00371">
    <property type="reaction ID" value="UER00545"/>
</dbReference>
<dbReference type="GO" id="GO:0046524">
    <property type="term" value="F:sucrose-phosphate synthase activity"/>
    <property type="evidence" value="ECO:0007669"/>
    <property type="project" value="UniProtKB-EC"/>
</dbReference>
<dbReference type="GO" id="GO:0005986">
    <property type="term" value="P:sucrose biosynthetic process"/>
    <property type="evidence" value="ECO:0007669"/>
    <property type="project" value="UniProtKB-UniPathway"/>
</dbReference>
<dbReference type="CDD" id="cd03800">
    <property type="entry name" value="GT4_sucrose_synthase"/>
    <property type="match status" value="1"/>
</dbReference>
<dbReference type="CDD" id="cd16419">
    <property type="entry name" value="HAD_SPS"/>
    <property type="match status" value="1"/>
</dbReference>
<dbReference type="Gene3D" id="3.90.1070.10">
    <property type="match status" value="1"/>
</dbReference>
<dbReference type="Gene3D" id="3.40.50.2000">
    <property type="entry name" value="Glycogen Phosphorylase B"/>
    <property type="match status" value="2"/>
</dbReference>
<dbReference type="Gene3D" id="3.40.50.1000">
    <property type="entry name" value="HAD superfamily/HAD-like"/>
    <property type="match status" value="1"/>
</dbReference>
<dbReference type="InterPro" id="IPR001296">
    <property type="entry name" value="Glyco_trans_1"/>
</dbReference>
<dbReference type="InterPro" id="IPR023214">
    <property type="entry name" value="HAD_sf"/>
</dbReference>
<dbReference type="InterPro" id="IPR006380">
    <property type="entry name" value="SPP-like_dom"/>
</dbReference>
<dbReference type="InterPro" id="IPR044161">
    <property type="entry name" value="SPS"/>
</dbReference>
<dbReference type="InterPro" id="IPR035659">
    <property type="entry name" value="SPS_C"/>
</dbReference>
<dbReference type="InterPro" id="IPR012819">
    <property type="entry name" value="SPS_pln"/>
</dbReference>
<dbReference type="InterPro" id="IPR000368">
    <property type="entry name" value="Sucrose_synth_GT-B1"/>
</dbReference>
<dbReference type="NCBIfam" id="TIGR02468">
    <property type="entry name" value="sucrsPsyn_pln"/>
    <property type="match status" value="1"/>
</dbReference>
<dbReference type="PANTHER" id="PTHR46039:SF2">
    <property type="entry name" value="SUCROSE-PHOSPHATE SYNTHASE 1"/>
    <property type="match status" value="1"/>
</dbReference>
<dbReference type="PANTHER" id="PTHR46039">
    <property type="entry name" value="SUCROSE-PHOSPHATE SYNTHASE 3-RELATED"/>
    <property type="match status" value="1"/>
</dbReference>
<dbReference type="Pfam" id="PF00534">
    <property type="entry name" value="Glycos_transf_1"/>
    <property type="match status" value="1"/>
</dbReference>
<dbReference type="Pfam" id="PF00862">
    <property type="entry name" value="GT-B_Sucrose_synth"/>
    <property type="match status" value="1"/>
</dbReference>
<dbReference type="Pfam" id="PF05116">
    <property type="entry name" value="S6PP"/>
    <property type="match status" value="1"/>
</dbReference>
<dbReference type="SUPFAM" id="SSF53756">
    <property type="entry name" value="UDP-Glycosyltransferase/glycogen phosphorylase"/>
    <property type="match status" value="1"/>
</dbReference>
<evidence type="ECO:0000250" key="1"/>
<evidence type="ECO:0000256" key="2">
    <source>
        <dbReference type="SAM" id="MobiDB-lite"/>
    </source>
</evidence>
<evidence type="ECO:0000305" key="3"/>
<accession>Q43876</accession>
<reference key="1">
    <citation type="journal article" date="1996" name="Gene">
        <title>Cloning and characterization of full-length cDNA encoding sucrose phosphate synthase from faba bean.</title>
        <authorList>
            <person name="Heim U."/>
            <person name="Weber H."/>
            <person name="Wobus U."/>
        </authorList>
    </citation>
    <scope>NUCLEOTIDE SEQUENCE [MRNA]</scope>
    <source>
        <strain>cv. Fribo</strain>
        <tissue>Seed coat</tissue>
    </source>
</reference>
<reference key="2">
    <citation type="submission" date="1995-03" db="EMBL/GenBank/DDBJ databases">
        <authorList>
            <person name="Buchner P."/>
        </authorList>
    </citation>
    <scope>NUCLEOTIDE SEQUENCE [MRNA] OF 198-314</scope>
    <source>
        <strain>cv. Fribo</strain>
    </source>
</reference>
<proteinExistence type="evidence at transcript level"/>
<keyword id="KW-0328">Glycosyltransferase</keyword>
<keyword id="KW-0808">Transferase</keyword>
<sequence length="1059" mass="118204">MAGNDWLNSYLEAILDVGPGLDDAKSSLLLRERGRFSPTRYFVEEVIGFDETDLYRSWVRASSSRSPQERNTRLENMCWRIWNLARQKKQLESEAVQRVNKRRLERERGRREATADMSEDLSEGERGDPVSDVSTHGGGDSVKSRLPRISSADAMETWVNSQKGKKLYIVLISIHGLIRGENMELGRDSDTGGQVKYVVELARALGSMPGVYRVDLLTRQVSSPDVDWSYGEPTEMLAPRNTDEFGDDMGESSGAYIIRIPFGPRNKYIPKEELWPYIPEFVDGAMGHIIQMSKALGEQIGSGHAVWPVAIHGHYADAGDSAALLSGALNVPMIFTGHSLGRDKLEQLLKQGRLSTDEINSTYKIMRRIEAEELALDGTEIVITSTRQEIEEQWRLYNGFDPVLERKIRARIRRNVSCYGRYMPRMSVIPPGMEFHHIAPLDGDIETEPEGILDHPAPQDPPIWSEIMRFFSNPRKPVILALARPDPKKNITTLVKAFGECRPLRELANLTLIMGNRDGIDEMSSTSSSVLLSVLKLIDKYDLYGQVAYPKHHKQSDVPDIYRLAAKTKGVFINPAFIEPFGLTLIEAAAYGLPMVATKNGGPVDIHRVLDNGLLIDPHDEKSIADALLKLVSNKQLWAKCRQNGLKNIHLFSWPEHCKTYLSKIATCKPRHPQWQRSEDGGESSESEESPGDSLRDIQDLSLNLKFSLDGERSGDSGNDNSLDPDGNATDRTTKLENAVLSWSKGISKDTRRGGATEKSGQNSNASKFPPLRSRNRLFVIAVDCDTTSGLLEMIKLIFEAAGEERAEGSVGFILSTSLTISEIQSFLISGGLSPNDFDAYICNSGSDLYYPSLNSEDRLFVGDLYFHSHIEYRWGGEGLRKTLIRWASSITDKKSENNEQIVSPAEQLSTDYCYAFNVRKAGMAPPLKELRKLMRIQALRCHPIYCQNGTRLNVIPVLASRSQALRYLYVRWGFELSKMVVFVGECGDTDYEGLVGGLHKSVILKGVGSRAISQLHNNRNYPLSDVMPLDSPNIVQATEGSSSADIQALLEKVGYHKG</sequence>
<protein>
    <recommendedName>
        <fullName>Probable sucrose-phosphate synthase</fullName>
        <ecNumber>2.4.1.14</ecNumber>
    </recommendedName>
    <alternativeName>
        <fullName>UDP-glucose-fructose-phosphate glucosyltransferase</fullName>
    </alternativeName>
</protein>
<feature type="chain" id="PRO_0000204675" description="Probable sucrose-phosphate synthase">
    <location>
        <begin position="1"/>
        <end position="1059"/>
    </location>
</feature>
<feature type="region of interest" description="Disordered" evidence="2">
    <location>
        <begin position="95"/>
        <end position="145"/>
    </location>
</feature>
<feature type="region of interest" description="Disordered" evidence="2">
    <location>
        <begin position="671"/>
        <end position="695"/>
    </location>
</feature>
<feature type="region of interest" description="Disordered" evidence="2">
    <location>
        <begin position="710"/>
        <end position="731"/>
    </location>
</feature>
<feature type="region of interest" description="Disordered" evidence="2">
    <location>
        <begin position="748"/>
        <end position="769"/>
    </location>
</feature>
<feature type="compositionally biased region" description="Basic and acidic residues" evidence="2">
    <location>
        <begin position="102"/>
        <end position="114"/>
    </location>
</feature>
<feature type="compositionally biased region" description="Acidic residues" evidence="2">
    <location>
        <begin position="681"/>
        <end position="691"/>
    </location>
</feature>
<comment type="function">
    <text evidence="1">Plays a role in photosynthetic sucrose synthesis by catalyzing the rate-limiting step of sucrose biosynthesis from UDP-glucose and fructose- 6-phosphate. Involved in the regulation of carbon partitioning in the leaves of plants. May regulate the synthesis of sucrose and therefore play a major role as a limiting factor in the export of photoassimilates out of the leaf. Plays a role for sucrose availability that is essential for plant growth and fiber elongation (By similarity).</text>
</comment>
<comment type="catalytic activity">
    <reaction>
        <text>beta-D-fructose 6-phosphate + UDP-alpha-D-glucose = sucrose 6(F)-phosphate + UDP + H(+)</text>
        <dbReference type="Rhea" id="RHEA:22172"/>
        <dbReference type="ChEBI" id="CHEBI:15378"/>
        <dbReference type="ChEBI" id="CHEBI:57634"/>
        <dbReference type="ChEBI" id="CHEBI:57723"/>
        <dbReference type="ChEBI" id="CHEBI:58223"/>
        <dbReference type="ChEBI" id="CHEBI:58885"/>
        <dbReference type="EC" id="2.4.1.14"/>
    </reaction>
</comment>
<comment type="activity regulation">
    <text>Activity is regulated by phosphorylation and moderated by concentration of metabolites and light.</text>
</comment>
<comment type="pathway">
    <text>Glycan biosynthesis; sucrose biosynthesis; sucrose from D-fructose 6-phosphate and UDP-alpha-D-glucose: step 1/2.</text>
</comment>
<comment type="subunit">
    <text evidence="1">Homodimer or homotetramer.</text>
</comment>
<comment type="similarity">
    <text evidence="3">Belongs to the glycosyltransferase 1 family.</text>
</comment>
<gene>
    <name type="primary">SPS</name>
</gene>
<name>SPSA_VICFA</name>
<organism>
    <name type="scientific">Vicia faba</name>
    <name type="common">Broad bean</name>
    <name type="synonym">Faba vulgaris</name>
    <dbReference type="NCBI Taxonomy" id="3906"/>
    <lineage>
        <taxon>Eukaryota</taxon>
        <taxon>Viridiplantae</taxon>
        <taxon>Streptophyta</taxon>
        <taxon>Embryophyta</taxon>
        <taxon>Tracheophyta</taxon>
        <taxon>Spermatophyta</taxon>
        <taxon>Magnoliopsida</taxon>
        <taxon>eudicotyledons</taxon>
        <taxon>Gunneridae</taxon>
        <taxon>Pentapetalae</taxon>
        <taxon>rosids</taxon>
        <taxon>fabids</taxon>
        <taxon>Fabales</taxon>
        <taxon>Fabaceae</taxon>
        <taxon>Papilionoideae</taxon>
        <taxon>50 kb inversion clade</taxon>
        <taxon>NPAAA clade</taxon>
        <taxon>Hologalegina</taxon>
        <taxon>IRL clade</taxon>
        <taxon>Fabeae</taxon>
        <taxon>Vicia</taxon>
    </lineage>
</organism>